<feature type="chain" id="PRO_0000166971" description="Probable glycine dehydrogenase (decarboxylating) subunit 1">
    <location>
        <begin position="1"/>
        <end position="448"/>
    </location>
</feature>
<comment type="function">
    <text evidence="1">The glycine cleavage system catalyzes the degradation of glycine. The P protein binds the alpha-amino group of glycine through its pyridoxal phosphate cofactor; CO(2) is released and the remaining methylamine moiety is then transferred to the lipoamide cofactor of the H protein.</text>
</comment>
<comment type="catalytic activity">
    <reaction evidence="1">
        <text>N(6)-[(R)-lipoyl]-L-lysyl-[glycine-cleavage complex H protein] + glycine + H(+) = N(6)-[(R)-S(8)-aminomethyldihydrolipoyl]-L-lysyl-[glycine-cleavage complex H protein] + CO2</text>
        <dbReference type="Rhea" id="RHEA:24304"/>
        <dbReference type="Rhea" id="RHEA-COMP:10494"/>
        <dbReference type="Rhea" id="RHEA-COMP:10495"/>
        <dbReference type="ChEBI" id="CHEBI:15378"/>
        <dbReference type="ChEBI" id="CHEBI:16526"/>
        <dbReference type="ChEBI" id="CHEBI:57305"/>
        <dbReference type="ChEBI" id="CHEBI:83099"/>
        <dbReference type="ChEBI" id="CHEBI:83143"/>
        <dbReference type="EC" id="1.4.4.2"/>
    </reaction>
</comment>
<comment type="subunit">
    <text evidence="1">The glycine cleavage system is composed of four proteins: P, T, L and H. In this organism, the P 'protein' is a heterodimer of two subunits.</text>
</comment>
<comment type="similarity">
    <text evidence="1">Belongs to the GcvP family. N-terminal subunit subfamily.</text>
</comment>
<reference key="1">
    <citation type="journal article" date="2001" name="Lancet">
        <title>Whole genome sequencing of meticillin-resistant Staphylococcus aureus.</title>
        <authorList>
            <person name="Kuroda M."/>
            <person name="Ohta T."/>
            <person name="Uchiyama I."/>
            <person name="Baba T."/>
            <person name="Yuzawa H."/>
            <person name="Kobayashi I."/>
            <person name="Cui L."/>
            <person name="Oguchi A."/>
            <person name="Aoki K."/>
            <person name="Nagai Y."/>
            <person name="Lian J.-Q."/>
            <person name="Ito T."/>
            <person name="Kanamori M."/>
            <person name="Matsumaru H."/>
            <person name="Maruyama A."/>
            <person name="Murakami H."/>
            <person name="Hosoyama A."/>
            <person name="Mizutani-Ui Y."/>
            <person name="Takahashi N.K."/>
            <person name="Sawano T."/>
            <person name="Inoue R."/>
            <person name="Kaito C."/>
            <person name="Sekimizu K."/>
            <person name="Hirakawa H."/>
            <person name="Kuhara S."/>
            <person name="Goto S."/>
            <person name="Yabuzaki J."/>
            <person name="Kanehisa M."/>
            <person name="Yamashita A."/>
            <person name="Oshima K."/>
            <person name="Furuya K."/>
            <person name="Yoshino C."/>
            <person name="Shiba T."/>
            <person name="Hattori M."/>
            <person name="Ogasawara N."/>
            <person name="Hayashi H."/>
            <person name="Hiramatsu K."/>
        </authorList>
    </citation>
    <scope>NUCLEOTIDE SEQUENCE [LARGE SCALE GENOMIC DNA]</scope>
    <source>
        <strain>Mu50 / ATCC 700699</strain>
    </source>
</reference>
<name>GCSPA_STAAM</name>
<protein>
    <recommendedName>
        <fullName evidence="1">Probable glycine dehydrogenase (decarboxylating) subunit 1</fullName>
        <ecNumber evidence="1">1.4.4.2</ecNumber>
    </recommendedName>
    <alternativeName>
        <fullName evidence="1">Glycine cleavage system P-protein subunit 1</fullName>
    </alternativeName>
    <alternativeName>
        <fullName evidence="1">Glycine decarboxylase subunit 1</fullName>
    </alternativeName>
    <alternativeName>
        <fullName evidence="1">Glycine dehydrogenase (aminomethyl-transferring) subunit 1</fullName>
    </alternativeName>
</protein>
<evidence type="ECO:0000255" key="1">
    <source>
        <dbReference type="HAMAP-Rule" id="MF_00712"/>
    </source>
</evidence>
<accession>P64217</accession>
<accession>Q99TV8</accession>
<keyword id="KW-0560">Oxidoreductase</keyword>
<sequence>MSHRYIPLTEKDKQEMLQTIGAKSIGELFGDVPSDILLNRDLNIAEGEAETTLLRRLNRIASKNITKETHTSFLGAGVYDHYAPSVVDAMISRSEFYTAYTPYQPEISQGELQAIFEFQTLICELTDMDVANSSMYDGMTSFAEACILAFSQTKKNKIVVSKGLHYQALQVLHTYAKTRKEFEVVEIDLDGTVTDLKKLEAAVDDETAAVAVQYPNFYGSIEDLEKIQSFIEDKKALFIVYANPLALGLLTPPGSFGADIVVGDTQPFGIPAQFGGPHCGYFATTKKLMRKVPGRLVGQTQDDEGNRGFVLTLQAREQHIRRDKATSNICSNQALNALASSIAMSALGKQGIYDIAVQNIEHANYAKQQFIKKGFEVLDGTSFNEFVVKFDKPIQQVNEELVKYNIIGGFDLGVVSDDFKNHMLIAVTELRTKDEIDTFVEKAGELND</sequence>
<proteinExistence type="inferred from homology"/>
<gene>
    <name evidence="1" type="primary">gcvPA</name>
    <name type="ordered locus">SAV1536</name>
</gene>
<organism>
    <name type="scientific">Staphylococcus aureus (strain Mu50 / ATCC 700699)</name>
    <dbReference type="NCBI Taxonomy" id="158878"/>
    <lineage>
        <taxon>Bacteria</taxon>
        <taxon>Bacillati</taxon>
        <taxon>Bacillota</taxon>
        <taxon>Bacilli</taxon>
        <taxon>Bacillales</taxon>
        <taxon>Staphylococcaceae</taxon>
        <taxon>Staphylococcus</taxon>
    </lineage>
</organism>
<dbReference type="EC" id="1.4.4.2" evidence="1"/>
<dbReference type="EMBL" id="BA000017">
    <property type="protein sequence ID" value="BAB57698.1"/>
    <property type="molecule type" value="Genomic_DNA"/>
</dbReference>
<dbReference type="RefSeq" id="WP_000019691.1">
    <property type="nucleotide sequence ID" value="NC_002758.2"/>
</dbReference>
<dbReference type="SMR" id="P64217"/>
<dbReference type="KEGG" id="sav:SAV1536"/>
<dbReference type="HOGENOM" id="CLU_004620_0_2_9"/>
<dbReference type="PhylomeDB" id="P64217"/>
<dbReference type="Proteomes" id="UP000002481">
    <property type="component" value="Chromosome"/>
</dbReference>
<dbReference type="GO" id="GO:0004375">
    <property type="term" value="F:glycine dehydrogenase (decarboxylating) activity"/>
    <property type="evidence" value="ECO:0007669"/>
    <property type="project" value="UniProtKB-EC"/>
</dbReference>
<dbReference type="GO" id="GO:0019464">
    <property type="term" value="P:glycine decarboxylation via glycine cleavage system"/>
    <property type="evidence" value="ECO:0007669"/>
    <property type="project" value="UniProtKB-UniRule"/>
</dbReference>
<dbReference type="GO" id="GO:0009116">
    <property type="term" value="P:nucleoside metabolic process"/>
    <property type="evidence" value="ECO:0007669"/>
    <property type="project" value="InterPro"/>
</dbReference>
<dbReference type="CDD" id="cd00613">
    <property type="entry name" value="GDC-P"/>
    <property type="match status" value="1"/>
</dbReference>
<dbReference type="Gene3D" id="3.90.1150.10">
    <property type="entry name" value="Aspartate Aminotransferase, domain 1"/>
    <property type="match status" value="1"/>
</dbReference>
<dbReference type="Gene3D" id="3.40.640.10">
    <property type="entry name" value="Type I PLP-dependent aspartate aminotransferase-like (Major domain)"/>
    <property type="match status" value="1"/>
</dbReference>
<dbReference type="HAMAP" id="MF_00712">
    <property type="entry name" value="GcvPA"/>
    <property type="match status" value="1"/>
</dbReference>
<dbReference type="InterPro" id="IPR023010">
    <property type="entry name" value="GcvPA"/>
</dbReference>
<dbReference type="InterPro" id="IPR049315">
    <property type="entry name" value="GDC-P_N"/>
</dbReference>
<dbReference type="InterPro" id="IPR020581">
    <property type="entry name" value="GDC_P"/>
</dbReference>
<dbReference type="InterPro" id="IPR015424">
    <property type="entry name" value="PyrdxlP-dep_Trfase"/>
</dbReference>
<dbReference type="InterPro" id="IPR015421">
    <property type="entry name" value="PyrdxlP-dep_Trfase_major"/>
</dbReference>
<dbReference type="InterPro" id="IPR015422">
    <property type="entry name" value="PyrdxlP-dep_Trfase_small"/>
</dbReference>
<dbReference type="NCBIfam" id="NF001696">
    <property type="entry name" value="PRK00451.1"/>
    <property type="match status" value="1"/>
</dbReference>
<dbReference type="PANTHER" id="PTHR42806">
    <property type="entry name" value="GLYCINE CLEAVAGE SYSTEM P-PROTEIN"/>
    <property type="match status" value="1"/>
</dbReference>
<dbReference type="PANTHER" id="PTHR42806:SF1">
    <property type="entry name" value="GLYCINE DEHYDROGENASE (DECARBOXYLATING)"/>
    <property type="match status" value="1"/>
</dbReference>
<dbReference type="Pfam" id="PF02347">
    <property type="entry name" value="GDC-P"/>
    <property type="match status" value="1"/>
</dbReference>
<dbReference type="PIRSF" id="PIRSF006815">
    <property type="entry name" value="GcvPA"/>
    <property type="match status" value="1"/>
</dbReference>
<dbReference type="SUPFAM" id="SSF53383">
    <property type="entry name" value="PLP-dependent transferases"/>
    <property type="match status" value="1"/>
</dbReference>